<proteinExistence type="inferred from homology"/>
<reference key="1">
    <citation type="journal article" date="2002" name="Lancet">
        <title>Genome and virulence determinants of high virulence community-acquired MRSA.</title>
        <authorList>
            <person name="Baba T."/>
            <person name="Takeuchi F."/>
            <person name="Kuroda M."/>
            <person name="Yuzawa H."/>
            <person name="Aoki K."/>
            <person name="Oguchi A."/>
            <person name="Nagai Y."/>
            <person name="Iwama N."/>
            <person name="Asano K."/>
            <person name="Naimi T."/>
            <person name="Kuroda H."/>
            <person name="Cui L."/>
            <person name="Yamamoto K."/>
            <person name="Hiramatsu K."/>
        </authorList>
    </citation>
    <scope>NUCLEOTIDE SEQUENCE [LARGE SCALE GENOMIC DNA]</scope>
    <source>
        <strain>MW2</strain>
    </source>
</reference>
<comment type="catalytic activity">
    <reaction evidence="1">
        <text>1-(5-phospho-beta-D-ribosyl)-ATP + H2O = 1-(5-phospho-beta-D-ribosyl)-5'-AMP + diphosphate + H(+)</text>
        <dbReference type="Rhea" id="RHEA:22828"/>
        <dbReference type="ChEBI" id="CHEBI:15377"/>
        <dbReference type="ChEBI" id="CHEBI:15378"/>
        <dbReference type="ChEBI" id="CHEBI:33019"/>
        <dbReference type="ChEBI" id="CHEBI:59457"/>
        <dbReference type="ChEBI" id="CHEBI:73183"/>
        <dbReference type="EC" id="3.6.1.31"/>
    </reaction>
</comment>
<comment type="catalytic activity">
    <reaction evidence="1">
        <text>1-(5-phospho-beta-D-ribosyl)-5'-AMP + H2O = 1-(5-phospho-beta-D-ribosyl)-5-[(5-phospho-beta-D-ribosylamino)methylideneamino]imidazole-4-carboxamide</text>
        <dbReference type="Rhea" id="RHEA:20049"/>
        <dbReference type="ChEBI" id="CHEBI:15377"/>
        <dbReference type="ChEBI" id="CHEBI:58435"/>
        <dbReference type="ChEBI" id="CHEBI:59457"/>
        <dbReference type="EC" id="3.5.4.19"/>
    </reaction>
</comment>
<comment type="pathway">
    <text evidence="1">Amino-acid biosynthesis; L-histidine biosynthesis; L-histidine from 5-phospho-alpha-D-ribose 1-diphosphate: step 2/9.</text>
</comment>
<comment type="pathway">
    <text evidence="1">Amino-acid biosynthesis; L-histidine biosynthesis; L-histidine from 5-phospho-alpha-D-ribose 1-diphosphate: step 3/9.</text>
</comment>
<comment type="subcellular location">
    <subcellularLocation>
        <location evidence="1">Cytoplasm</location>
    </subcellularLocation>
</comment>
<comment type="similarity">
    <text evidence="1">In the N-terminal section; belongs to the PRA-CH family.</text>
</comment>
<comment type="similarity">
    <text evidence="1">In the C-terminal section; belongs to the PRA-PH family.</text>
</comment>
<evidence type="ECO:0000255" key="1">
    <source>
        <dbReference type="HAMAP-Rule" id="MF_01019"/>
    </source>
</evidence>
<gene>
    <name evidence="1" type="primary">hisI</name>
    <name evidence="1" type="synonym">hisIE</name>
    <name type="ordered locus">MW2591</name>
</gene>
<protein>
    <recommendedName>
        <fullName evidence="1">Histidine biosynthesis bifunctional protein HisIE</fullName>
    </recommendedName>
    <domain>
        <recommendedName>
            <fullName evidence="1">Phosphoribosyl-AMP cyclohydrolase</fullName>
            <shortName evidence="1">PRA-CH</shortName>
            <ecNumber evidence="1">3.5.4.19</ecNumber>
        </recommendedName>
    </domain>
    <domain>
        <recommendedName>
            <fullName evidence="1">Phosphoribosyl-ATP pyrophosphatase</fullName>
            <shortName evidence="1">PRA-PH</shortName>
            <ecNumber evidence="1">3.6.1.31</ecNumber>
        </recommendedName>
    </domain>
</protein>
<name>HIS2_STAAW</name>
<dbReference type="EC" id="3.5.4.19" evidence="1"/>
<dbReference type="EC" id="3.6.1.31" evidence="1"/>
<dbReference type="EMBL" id="BA000033">
    <property type="protein sequence ID" value="BAB96456.1"/>
    <property type="molecule type" value="Genomic_DNA"/>
</dbReference>
<dbReference type="SMR" id="Q8NUI4"/>
<dbReference type="KEGG" id="sam:MW2591"/>
<dbReference type="HOGENOM" id="CLU_048577_3_1_9"/>
<dbReference type="UniPathway" id="UPA00031">
    <property type="reaction ID" value="UER00007"/>
</dbReference>
<dbReference type="UniPathway" id="UPA00031">
    <property type="reaction ID" value="UER00008"/>
</dbReference>
<dbReference type="GO" id="GO:0005737">
    <property type="term" value="C:cytoplasm"/>
    <property type="evidence" value="ECO:0007669"/>
    <property type="project" value="UniProtKB-SubCell"/>
</dbReference>
<dbReference type="GO" id="GO:0005524">
    <property type="term" value="F:ATP binding"/>
    <property type="evidence" value="ECO:0007669"/>
    <property type="project" value="UniProtKB-KW"/>
</dbReference>
<dbReference type="GO" id="GO:0004635">
    <property type="term" value="F:phosphoribosyl-AMP cyclohydrolase activity"/>
    <property type="evidence" value="ECO:0007669"/>
    <property type="project" value="UniProtKB-UniRule"/>
</dbReference>
<dbReference type="GO" id="GO:0004636">
    <property type="term" value="F:phosphoribosyl-ATP diphosphatase activity"/>
    <property type="evidence" value="ECO:0007669"/>
    <property type="project" value="UniProtKB-UniRule"/>
</dbReference>
<dbReference type="GO" id="GO:0000105">
    <property type="term" value="P:L-histidine biosynthetic process"/>
    <property type="evidence" value="ECO:0007669"/>
    <property type="project" value="UniProtKB-UniRule"/>
</dbReference>
<dbReference type="CDD" id="cd11534">
    <property type="entry name" value="NTP-PPase_HisIE_like"/>
    <property type="match status" value="1"/>
</dbReference>
<dbReference type="FunFam" id="3.10.20.810:FF:000001">
    <property type="entry name" value="Histidine biosynthesis bifunctional protein HisIE"/>
    <property type="match status" value="1"/>
</dbReference>
<dbReference type="Gene3D" id="1.10.287.1080">
    <property type="entry name" value="MazG-like"/>
    <property type="match status" value="1"/>
</dbReference>
<dbReference type="Gene3D" id="3.10.20.810">
    <property type="entry name" value="Phosphoribosyl-AMP cyclohydrolase"/>
    <property type="match status" value="1"/>
</dbReference>
<dbReference type="HAMAP" id="MF_01020">
    <property type="entry name" value="HisE"/>
    <property type="match status" value="1"/>
</dbReference>
<dbReference type="HAMAP" id="MF_01021">
    <property type="entry name" value="HisI"/>
    <property type="match status" value="1"/>
</dbReference>
<dbReference type="HAMAP" id="MF_01019">
    <property type="entry name" value="HisIE"/>
    <property type="match status" value="1"/>
</dbReference>
<dbReference type="InterPro" id="IPR023019">
    <property type="entry name" value="His_synth_HisIE"/>
</dbReference>
<dbReference type="InterPro" id="IPR008179">
    <property type="entry name" value="HisE"/>
</dbReference>
<dbReference type="InterPro" id="IPR026660">
    <property type="entry name" value="PRA-CH"/>
</dbReference>
<dbReference type="InterPro" id="IPR021130">
    <property type="entry name" value="PRib-ATP_PPHydrolase-like"/>
</dbReference>
<dbReference type="InterPro" id="IPR002496">
    <property type="entry name" value="PRib_AMP_CycHydrolase_dom"/>
</dbReference>
<dbReference type="InterPro" id="IPR038019">
    <property type="entry name" value="PRib_AMP_CycHydrolase_sf"/>
</dbReference>
<dbReference type="NCBIfam" id="TIGR03188">
    <property type="entry name" value="histidine_hisI"/>
    <property type="match status" value="1"/>
</dbReference>
<dbReference type="NCBIfam" id="NF000768">
    <property type="entry name" value="PRK00051.1"/>
    <property type="match status" value="1"/>
</dbReference>
<dbReference type="NCBIfam" id="NF002747">
    <property type="entry name" value="PRK02759.1"/>
    <property type="match status" value="1"/>
</dbReference>
<dbReference type="PANTHER" id="PTHR42945">
    <property type="entry name" value="HISTIDINE BIOSYNTHESIS BIFUNCTIONAL PROTEIN"/>
    <property type="match status" value="1"/>
</dbReference>
<dbReference type="PANTHER" id="PTHR42945:SF9">
    <property type="entry name" value="HISTIDINE BIOSYNTHESIS BIFUNCTIONAL PROTEIN HISIE"/>
    <property type="match status" value="1"/>
</dbReference>
<dbReference type="Pfam" id="PF01502">
    <property type="entry name" value="PRA-CH"/>
    <property type="match status" value="1"/>
</dbReference>
<dbReference type="Pfam" id="PF01503">
    <property type="entry name" value="PRA-PH"/>
    <property type="match status" value="1"/>
</dbReference>
<dbReference type="SUPFAM" id="SSF101386">
    <property type="entry name" value="all-alpha NTP pyrophosphatases"/>
    <property type="match status" value="1"/>
</dbReference>
<dbReference type="SUPFAM" id="SSF141734">
    <property type="entry name" value="HisI-like"/>
    <property type="match status" value="1"/>
</dbReference>
<keyword id="KW-0028">Amino-acid biosynthesis</keyword>
<keyword id="KW-0067">ATP-binding</keyword>
<keyword id="KW-0963">Cytoplasm</keyword>
<keyword id="KW-0368">Histidine biosynthesis</keyword>
<keyword id="KW-0378">Hydrolase</keyword>
<keyword id="KW-0511">Multifunctional enzyme</keyword>
<keyword id="KW-0547">Nucleotide-binding</keyword>
<sequence length="210" mass="23973">MTNYKIDFSKGLVPAILQDNQTKQVLMLGYMNQEAFDKTIEDGVVCFYSRSKQRLWTKGETSGHTQRVKDIHVDCDNDTILIDVIPNGPTCHTGSQSCFNTEVPFSVQTLAQTVQDSAQSNNEKSYTKYLLTEGIEKITKKYGEEAFEVVIEAIKGDKKAFVSEVADELYHLFVLMHALGVDFSEIEAELARRHHKRNNFKGERQNIEQW</sequence>
<organism>
    <name type="scientific">Staphylococcus aureus (strain MW2)</name>
    <dbReference type="NCBI Taxonomy" id="196620"/>
    <lineage>
        <taxon>Bacteria</taxon>
        <taxon>Bacillati</taxon>
        <taxon>Bacillota</taxon>
        <taxon>Bacilli</taxon>
        <taxon>Bacillales</taxon>
        <taxon>Staphylococcaceae</taxon>
        <taxon>Staphylococcus</taxon>
    </lineage>
</organism>
<feature type="chain" id="PRO_0000136435" description="Histidine biosynthesis bifunctional protein HisIE">
    <location>
        <begin position="1"/>
        <end position="210"/>
    </location>
</feature>
<feature type="region of interest" description="Phosphoribosyl-AMP cyclohydrolase">
    <location>
        <begin position="1"/>
        <end position="106"/>
    </location>
</feature>
<feature type="region of interest" description="Phosphoribosyl-ATP pyrophosphohydrolase">
    <location>
        <begin position="107"/>
        <end position="210"/>
    </location>
</feature>
<accession>Q8NUI4</accession>